<comment type="function">
    <text evidence="1">Thrombin-like snake venom serine protease.</text>
</comment>
<comment type="subunit">
    <text evidence="6">Monomer.</text>
</comment>
<comment type="subcellular location">
    <subcellularLocation>
        <location evidence="4">Secreted</location>
    </subcellularLocation>
</comment>
<comment type="tissue specificity">
    <text evidence="7">Expressed by the vanom gland.</text>
</comment>
<comment type="mass spectrometry" mass="29765.0" method="MALDI" evidence="4"/>
<comment type="similarity">
    <text evidence="6">Belongs to the peptidase S1 family.</text>
</comment>
<proteinExistence type="evidence at protein level"/>
<accession>C0HK19</accession>
<protein>
    <recommendedName>
        <fullName evidence="5">Thrombin-like enzyme collinein-3</fullName>
        <shortName evidence="5">SVTLE collinein-3</shortName>
        <ecNumber evidence="1">3.4.21.-</ecNumber>
    </recommendedName>
    <alternativeName>
        <fullName evidence="2">Fibrinogen-clotting enzyme</fullName>
    </alternativeName>
    <alternativeName>
        <fullName evidence="5">Snake venom serine protease</fullName>
        <shortName evidence="5">SVSP</shortName>
    </alternativeName>
</protein>
<keyword id="KW-0903">Direct protein sequencing</keyword>
<keyword id="KW-1015">Disulfide bond</keyword>
<keyword id="KW-1206">Fibrinogenolytic toxin</keyword>
<keyword id="KW-1199">Hemostasis impairing toxin</keyword>
<keyword id="KW-0378">Hydrolase</keyword>
<keyword id="KW-0645">Protease</keyword>
<keyword id="KW-0964">Secreted</keyword>
<keyword id="KW-0720">Serine protease</keyword>
<keyword id="KW-0800">Toxin</keyword>
<organism evidence="5">
    <name type="scientific">Crotalus durissus collilineatus</name>
    <name type="common">Brazilian rattlesnake</name>
    <dbReference type="NCBI Taxonomy" id="221569"/>
    <lineage>
        <taxon>Eukaryota</taxon>
        <taxon>Metazoa</taxon>
        <taxon>Chordata</taxon>
        <taxon>Craniata</taxon>
        <taxon>Vertebrata</taxon>
        <taxon>Euteleostomi</taxon>
        <taxon>Lepidosauria</taxon>
        <taxon>Squamata</taxon>
        <taxon>Bifurcata</taxon>
        <taxon>Unidentata</taxon>
        <taxon>Episquamata</taxon>
        <taxon>Toxicofera</taxon>
        <taxon>Serpentes</taxon>
        <taxon>Colubroidea</taxon>
        <taxon>Viperidae</taxon>
        <taxon>Crotalinae</taxon>
        <taxon>Crotalus</taxon>
    </lineage>
</organism>
<evidence type="ECO:0000250" key="1">
    <source>
        <dbReference type="UniProtKB" id="A0A0S4FKT4"/>
    </source>
</evidence>
<evidence type="ECO:0000250" key="2">
    <source>
        <dbReference type="UniProtKB" id="Q9PSN3"/>
    </source>
</evidence>
<evidence type="ECO:0000255" key="3">
    <source>
        <dbReference type="PROSITE-ProRule" id="PRU00274"/>
    </source>
</evidence>
<evidence type="ECO:0000269" key="4">
    <source ref="1"/>
</evidence>
<evidence type="ECO:0000303" key="5">
    <source ref="1"/>
</evidence>
<evidence type="ECO:0000305" key="6"/>
<evidence type="ECO:0000305" key="7">
    <source ref="1"/>
</evidence>
<feature type="chain" id="PRO_0000438331" description="Thrombin-like enzyme collinein-3" evidence="4">
    <location>
        <begin position="1" status="less than"/>
        <end position="81" status="greater than"/>
    </location>
</feature>
<feature type="active site" evidence="3">
    <location>
        <position position="4"/>
    </location>
</feature>
<feature type="disulfide bond" evidence="2">
    <location>
        <begin position="36"/>
        <end status="unknown"/>
    </location>
</feature>
<feature type="disulfide bond" evidence="2">
    <location>
        <begin status="unknown"/>
        <end position="40"/>
    </location>
</feature>
<feature type="disulfide bond" evidence="2">
    <location>
        <begin position="51"/>
        <end position="68"/>
    </location>
</feature>
<feature type="disulfide bond" evidence="2">
    <location>
        <begin position="79"/>
        <end status="unknown"/>
    </location>
</feature>
<feature type="non-consecutive residues" evidence="5">
    <location>
        <begin position="37"/>
        <end position="38"/>
    </location>
</feature>
<feature type="non-terminal residue" evidence="5">
    <location>
        <position position="1"/>
    </location>
</feature>
<feature type="non-terminal residue" evidence="5">
    <location>
        <position position="81"/>
    </location>
</feature>
<name>VSP3_CRODO</name>
<reference evidence="6" key="1">
    <citation type="submission" date="2016-04" db="UniProtKB">
        <title>Identification of new serine protease isoforms from Crotalus durissus collilineatus venom.</title>
        <authorList>
            <person name="Boldrini-France J."/>
            <person name="Cologna C.T."/>
            <person name="de Pauw E."/>
            <person name="Quinton L."/>
            <person name="Arantes E.C."/>
        </authorList>
    </citation>
    <scope>PROTEIN SEQUENCE</scope>
    <scope>MASS SPECTROMETRY</scope>
    <scope>SUBCELLULAR LOCATION</scope>
    <source>
        <tissue evidence="5">Venom</tissue>
    </source>
</reference>
<dbReference type="EC" id="3.4.21.-" evidence="1"/>
<dbReference type="SMR" id="C0HK19"/>
<dbReference type="GO" id="GO:0005576">
    <property type="term" value="C:extracellular region"/>
    <property type="evidence" value="ECO:0007669"/>
    <property type="project" value="UniProtKB-SubCell"/>
</dbReference>
<dbReference type="GO" id="GO:0030141">
    <property type="term" value="C:secretory granule"/>
    <property type="evidence" value="ECO:0007669"/>
    <property type="project" value="TreeGrafter"/>
</dbReference>
<dbReference type="GO" id="GO:0004252">
    <property type="term" value="F:serine-type endopeptidase activity"/>
    <property type="evidence" value="ECO:0007669"/>
    <property type="project" value="InterPro"/>
</dbReference>
<dbReference type="GO" id="GO:0090729">
    <property type="term" value="F:toxin activity"/>
    <property type="evidence" value="ECO:0007669"/>
    <property type="project" value="UniProtKB-KW"/>
</dbReference>
<dbReference type="GO" id="GO:0006508">
    <property type="term" value="P:proteolysis"/>
    <property type="evidence" value="ECO:0007669"/>
    <property type="project" value="UniProtKB-KW"/>
</dbReference>
<dbReference type="Gene3D" id="2.40.10.10">
    <property type="entry name" value="Trypsin-like serine proteases"/>
    <property type="match status" value="1"/>
</dbReference>
<dbReference type="InterPro" id="IPR009003">
    <property type="entry name" value="Peptidase_S1_PA"/>
</dbReference>
<dbReference type="InterPro" id="IPR043504">
    <property type="entry name" value="Peptidase_S1_PA_chymotrypsin"/>
</dbReference>
<dbReference type="InterPro" id="IPR001254">
    <property type="entry name" value="Trypsin_dom"/>
</dbReference>
<dbReference type="PANTHER" id="PTHR24271:SF47">
    <property type="entry name" value="KALLIKREIN-1"/>
    <property type="match status" value="1"/>
</dbReference>
<dbReference type="PANTHER" id="PTHR24271">
    <property type="entry name" value="KALLIKREIN-RELATED"/>
    <property type="match status" value="1"/>
</dbReference>
<dbReference type="Pfam" id="PF00089">
    <property type="entry name" value="Trypsin"/>
    <property type="match status" value="1"/>
</dbReference>
<dbReference type="SUPFAM" id="SSF50494">
    <property type="entry name" value="Trypsin-like serine proteases"/>
    <property type="match status" value="1"/>
</dbReference>
<sequence length="81" mass="8964">WDKDIMLIRLNKPVSYSEHIAPLSLPSSPPIVGSVCRPHCANINLLDYEVCRTAHPQFRLPATSRILCAGVLEGGIDTCHR</sequence>